<proteinExistence type="evidence at protein level"/>
<comment type="function">
    <text evidence="10 11">Component of the mitochondrial ribosome (mitoribosome), a dedicated translation machinery responsible for the synthesis of mitochondrial genome-encoded proteins, including at least some of the essential transmembrane subunits of the mitochondrial respiratory chain. The mitoribosomes are attached to the mitochondrial inner membrane and translation products are cotranslationally integrated into the membrane.</text>
</comment>
<comment type="subunit">
    <text evidence="5 7">Component of the mitochondrial large ribosomal subunit (mt-LSU). Mature yeast 74S mitochondrial ribosomes consist of a small (37S) and a large (54S) subunit. The 37S small subunit contains a 15S ribosomal RNA (15S mt-rRNA) and 34 different proteins. The 54S large subunit contains a 21S rRNA (21S mt-rRNA) and 46 different proteins.</text>
</comment>
<comment type="interaction">
    <interactant intactId="EBI-402">
        <id>P36517</id>
    </interactant>
    <interactant intactId="EBI-4134">
        <id>P21560</id>
        <label>CBP3</label>
    </interactant>
    <organismsDiffer>false</organismsDiffer>
    <experiments>3</experiments>
</comment>
<comment type="interaction">
    <interactant intactId="EBI-402">
        <id>P36517</id>
    </interactant>
    <interactant intactId="EBI-29042">
        <id>P53881</id>
        <label>MRPL22</label>
    </interactant>
    <organismsDiffer>false</organismsDiffer>
    <experiments>2</experiments>
</comment>
<comment type="subcellular location">
    <subcellularLocation>
        <location evidence="2 4">Mitochondrion</location>
    </subcellularLocation>
    <text evidence="6">Mitoribosomes are tethered to the mitochondrial inner membrane and spatially aligned with the membrane insertion machinery through two distinct membrane contact sites, formed by the 21S rRNA expansion segment 96-ES1 and the inner membrane protein MBA1.</text>
</comment>
<comment type="miscellaneous">
    <text evidence="3">Present with 7700 molecules/cell in log phase SD medium.</text>
</comment>
<comment type="similarity">
    <text evidence="9">Belongs to the universal ribosomal protein uL29 family.</text>
</comment>
<accession>P36517</accession>
<accession>D6VZ74</accession>
<sequence>MWKRSFHSQGGPLRARTKFTKPKPKQPVLPKDKIRPPTQLTHHSNNLRITEPIPPTTSNLRCPDDHPLWQFFSNKKFIRSADDLPPSSHIRPWSIPELRHKSFNDLHSLWYNCLREQNVLARENHLLKNIVGSTHDEFSELSNSIRTTMWQIRHVLNERELAYSASREFLQDESERKKFLDTLANDYFLNKDIPDDEVASMLTRFQLAIFGISETIQDNTVDINFIDGIKFLANLKLQRFKDSNDLISEISQEPITDVGESFILFTSDFEPHAVQEACVAIKDLRKSPDNKVPKLDELPTVRKYLKQLIHASSVEQATA</sequence>
<keyword id="KW-0002">3D-structure</keyword>
<keyword id="KW-0903">Direct protein sequencing</keyword>
<keyword id="KW-0496">Mitochondrion</keyword>
<keyword id="KW-1185">Reference proteome</keyword>
<keyword id="KW-0687">Ribonucleoprotein</keyword>
<keyword id="KW-0689">Ribosomal protein</keyword>
<keyword id="KW-0809">Transit peptide</keyword>
<name>RM04_YEAST</name>
<organism>
    <name type="scientific">Saccharomyces cerevisiae (strain ATCC 204508 / S288c)</name>
    <name type="common">Baker's yeast</name>
    <dbReference type="NCBI Taxonomy" id="559292"/>
    <lineage>
        <taxon>Eukaryota</taxon>
        <taxon>Fungi</taxon>
        <taxon>Dikarya</taxon>
        <taxon>Ascomycota</taxon>
        <taxon>Saccharomycotina</taxon>
        <taxon>Saccharomycetes</taxon>
        <taxon>Saccharomycetales</taxon>
        <taxon>Saccharomycetaceae</taxon>
        <taxon>Saccharomyces</taxon>
    </lineage>
</organism>
<gene>
    <name type="primary">MRPL4</name>
    <name type="ordered locus">YLR439W</name>
    <name type="ORF">L9753.1</name>
</gene>
<reference key="1">
    <citation type="journal article" date="1995" name="Gene">
        <title>Gene MRP-L4, encoding mitochondrial ribosomal protein YmL4, is indispensable for proper non-respiratory cell functions in yeast.</title>
        <authorList>
            <person name="Graack H.-R."/>
            <person name="Grohmann L."/>
            <person name="Kitakawa M."/>
            <person name="Goldschmidt-Reisin S."/>
        </authorList>
    </citation>
    <scope>NUCLEOTIDE SEQUENCE [GENOMIC DNA]</scope>
    <source>
        <strain>07173</strain>
    </source>
</reference>
<reference key="2">
    <citation type="journal article" date="1997" name="Nature">
        <title>The nucleotide sequence of Saccharomyces cerevisiae chromosome XII.</title>
        <authorList>
            <person name="Johnston M."/>
            <person name="Hillier L.W."/>
            <person name="Riles L."/>
            <person name="Albermann K."/>
            <person name="Andre B."/>
            <person name="Ansorge W."/>
            <person name="Benes V."/>
            <person name="Brueckner M."/>
            <person name="Delius H."/>
            <person name="Dubois E."/>
            <person name="Duesterhoeft A."/>
            <person name="Entian K.-D."/>
            <person name="Floeth M."/>
            <person name="Goffeau A."/>
            <person name="Hebling U."/>
            <person name="Heumann K."/>
            <person name="Heuss-Neitzel D."/>
            <person name="Hilbert H."/>
            <person name="Hilger F."/>
            <person name="Kleine K."/>
            <person name="Koetter P."/>
            <person name="Louis E.J."/>
            <person name="Messenguy F."/>
            <person name="Mewes H.-W."/>
            <person name="Miosga T."/>
            <person name="Moestl D."/>
            <person name="Mueller-Auer S."/>
            <person name="Nentwich U."/>
            <person name="Obermaier B."/>
            <person name="Piravandi E."/>
            <person name="Pohl T.M."/>
            <person name="Portetelle D."/>
            <person name="Purnelle B."/>
            <person name="Rechmann S."/>
            <person name="Rieger M."/>
            <person name="Rinke M."/>
            <person name="Rose M."/>
            <person name="Scharfe M."/>
            <person name="Scherens B."/>
            <person name="Scholler P."/>
            <person name="Schwager C."/>
            <person name="Schwarz S."/>
            <person name="Underwood A.P."/>
            <person name="Urrestarazu L.A."/>
            <person name="Vandenbol M."/>
            <person name="Verhasselt P."/>
            <person name="Vierendeels F."/>
            <person name="Voet M."/>
            <person name="Volckaert G."/>
            <person name="Voss H."/>
            <person name="Wambutt R."/>
            <person name="Wedler E."/>
            <person name="Wedler H."/>
            <person name="Zimmermann F.K."/>
            <person name="Zollner A."/>
            <person name="Hani J."/>
            <person name="Hoheisel J.D."/>
        </authorList>
    </citation>
    <scope>NUCLEOTIDE SEQUENCE [LARGE SCALE GENOMIC DNA]</scope>
    <source>
        <strain>ATCC 204508 / S288c</strain>
    </source>
</reference>
<reference key="3">
    <citation type="journal article" date="2014" name="G3 (Bethesda)">
        <title>The reference genome sequence of Saccharomyces cerevisiae: Then and now.</title>
        <authorList>
            <person name="Engel S.R."/>
            <person name="Dietrich F.S."/>
            <person name="Fisk D.G."/>
            <person name="Binkley G."/>
            <person name="Balakrishnan R."/>
            <person name="Costanzo M.C."/>
            <person name="Dwight S.S."/>
            <person name="Hitz B.C."/>
            <person name="Karra K."/>
            <person name="Nash R.S."/>
            <person name="Weng S."/>
            <person name="Wong E.D."/>
            <person name="Lloyd P."/>
            <person name="Skrzypek M.S."/>
            <person name="Miyasato S.R."/>
            <person name="Simison M."/>
            <person name="Cherry J.M."/>
        </authorList>
    </citation>
    <scope>GENOME REANNOTATION</scope>
    <source>
        <strain>ATCC 204508 / S288c</strain>
    </source>
</reference>
<reference key="4">
    <citation type="journal article" date="1988" name="FEBS Lett.">
        <title>Mitochondrial ribosomes of yeast: isolation of individual proteins and N-terminal sequencing.</title>
        <authorList>
            <person name="Graack H.-R."/>
            <person name="Grohmann L."/>
            <person name="Choli T."/>
        </authorList>
    </citation>
    <scope>PROTEIN SEQUENCE OF 15-41</scope>
    <scope>SUBUNIT</scope>
    <source>
        <strain>07173</strain>
    </source>
</reference>
<reference key="5">
    <citation type="journal article" date="2003" name="Nature">
        <title>Global analysis of protein localization in budding yeast.</title>
        <authorList>
            <person name="Huh W.-K."/>
            <person name="Falvo J.V."/>
            <person name="Gerke L.C."/>
            <person name="Carroll A.S."/>
            <person name="Howson R.W."/>
            <person name="Weissman J.S."/>
            <person name="O'Shea E.K."/>
        </authorList>
    </citation>
    <scope>SUBCELLULAR LOCATION [LARGE SCALE ANALYSIS]</scope>
</reference>
<reference key="6">
    <citation type="journal article" date="2003" name="Nature">
        <title>Global analysis of protein expression in yeast.</title>
        <authorList>
            <person name="Ghaemmaghami S."/>
            <person name="Huh W.-K."/>
            <person name="Bower K."/>
            <person name="Howson R.W."/>
            <person name="Belle A."/>
            <person name="Dephoure N."/>
            <person name="O'Shea E.K."/>
            <person name="Weissman J.S."/>
        </authorList>
    </citation>
    <scope>LEVEL OF PROTEIN EXPRESSION [LARGE SCALE ANALYSIS]</scope>
</reference>
<reference key="7">
    <citation type="journal article" date="2003" name="Proc. Natl. Acad. Sci. U.S.A.">
        <title>The proteome of Saccharomyces cerevisiae mitochondria.</title>
        <authorList>
            <person name="Sickmann A."/>
            <person name="Reinders J."/>
            <person name="Wagner Y."/>
            <person name="Joppich C."/>
            <person name="Zahedi R.P."/>
            <person name="Meyer H.E."/>
            <person name="Schoenfisch B."/>
            <person name="Perschil I."/>
            <person name="Chacinska A."/>
            <person name="Guiard B."/>
            <person name="Rehling P."/>
            <person name="Pfanner N."/>
            <person name="Meisinger C."/>
        </authorList>
    </citation>
    <scope>SUBCELLULAR LOCATION [LARGE SCALE ANALYSIS]</scope>
    <source>
        <strain>ATCC 76625 / YPH499</strain>
    </source>
</reference>
<reference key="8">
    <citation type="journal article" date="2015" name="Nat. Commun.">
        <title>Organization of the mitochondrial translation machinery studied in situ by cryoelectron tomography.</title>
        <authorList>
            <person name="Pfeffer S."/>
            <person name="Woellhaf M.W."/>
            <person name="Herrmann J.M."/>
            <person name="Forster F."/>
        </authorList>
    </citation>
    <scope>SUBCELLULAR LOCATION</scope>
</reference>
<reference key="9">
    <citation type="journal article" date="2014" name="Science">
        <title>Structure of the yeast mitochondrial large ribosomal subunit.</title>
        <authorList>
            <person name="Amunts A."/>
            <person name="Brown A."/>
            <person name="Bai X.C."/>
            <person name="Llacer J.L."/>
            <person name="Hussain T."/>
            <person name="Emsley P."/>
            <person name="Long F."/>
            <person name="Murshudov G."/>
            <person name="Scheres S.H."/>
            <person name="Ramakrishnan V."/>
        </authorList>
    </citation>
    <scope>STRUCTURE BY ELECTRON MICROSCOPY (3.20 ANGSTROMS)</scope>
    <scope>SUBUNIT</scope>
</reference>
<dbReference type="EMBL" id="Z30582">
    <property type="protein sequence ID" value="CAA83057.1"/>
    <property type="molecule type" value="Genomic_DNA"/>
</dbReference>
<dbReference type="EMBL" id="U21094">
    <property type="protein sequence ID" value="AAB67513.1"/>
    <property type="molecule type" value="Genomic_DNA"/>
</dbReference>
<dbReference type="EMBL" id="BK006945">
    <property type="protein sequence ID" value="DAA09740.1"/>
    <property type="molecule type" value="Genomic_DNA"/>
</dbReference>
<dbReference type="PIR" id="S59407">
    <property type="entry name" value="S59407"/>
</dbReference>
<dbReference type="RefSeq" id="NP_013544.1">
    <property type="nucleotide sequence ID" value="NM_001182327.1"/>
</dbReference>
<dbReference type="PDB" id="3J6B">
    <property type="method" value="EM"/>
    <property type="resolution" value="3.20 A"/>
    <property type="chains" value="T=1-319"/>
</dbReference>
<dbReference type="PDB" id="5MRC">
    <property type="method" value="EM"/>
    <property type="resolution" value="3.25 A"/>
    <property type="chains" value="T=15-239"/>
</dbReference>
<dbReference type="PDB" id="5MRE">
    <property type="method" value="EM"/>
    <property type="resolution" value="3.75 A"/>
    <property type="chains" value="T=15-239"/>
</dbReference>
<dbReference type="PDB" id="5MRF">
    <property type="method" value="EM"/>
    <property type="resolution" value="4.97 A"/>
    <property type="chains" value="T=15-239"/>
</dbReference>
<dbReference type="PDBsum" id="3J6B"/>
<dbReference type="PDBsum" id="5MRC"/>
<dbReference type="PDBsum" id="5MRE"/>
<dbReference type="PDBsum" id="5MRF"/>
<dbReference type="EMDB" id="EMD-3551"/>
<dbReference type="EMDB" id="EMD-3552"/>
<dbReference type="EMDB" id="EMD-3553"/>
<dbReference type="SMR" id="P36517"/>
<dbReference type="BioGRID" id="31698">
    <property type="interactions" value="141"/>
</dbReference>
<dbReference type="ComplexPortal" id="CPX-1602">
    <property type="entry name" value="54S mitochondrial large ribosomal subunit"/>
</dbReference>
<dbReference type="DIP" id="DIP-940N"/>
<dbReference type="FunCoup" id="P36517">
    <property type="interactions" value="302"/>
</dbReference>
<dbReference type="IntAct" id="P36517">
    <property type="interactions" value="60"/>
</dbReference>
<dbReference type="MINT" id="P36517"/>
<dbReference type="STRING" id="4932.YLR439W"/>
<dbReference type="GlyGen" id="P36517">
    <property type="glycosylation" value="1 site"/>
</dbReference>
<dbReference type="iPTMnet" id="P36517"/>
<dbReference type="PaxDb" id="4932-YLR439W"/>
<dbReference type="PeptideAtlas" id="P36517"/>
<dbReference type="EnsemblFungi" id="YLR439W_mRNA">
    <property type="protein sequence ID" value="YLR439W"/>
    <property type="gene ID" value="YLR439W"/>
</dbReference>
<dbReference type="GeneID" id="851160"/>
<dbReference type="KEGG" id="sce:YLR439W"/>
<dbReference type="AGR" id="SGD:S000004431"/>
<dbReference type="SGD" id="S000004431">
    <property type="gene designation" value="MRPL4"/>
</dbReference>
<dbReference type="VEuPathDB" id="FungiDB:YLR439W"/>
<dbReference type="eggNOG" id="KOG3331">
    <property type="taxonomic scope" value="Eukaryota"/>
</dbReference>
<dbReference type="GeneTree" id="ENSGT00390000002837"/>
<dbReference type="HOGENOM" id="CLU_872105_0_0_1"/>
<dbReference type="InParanoid" id="P36517"/>
<dbReference type="OMA" id="IRTTMWR"/>
<dbReference type="OrthoDB" id="270763at2759"/>
<dbReference type="BioCyc" id="YEAST:G3O-32495-MONOMER"/>
<dbReference type="BioGRID-ORCS" id="851160">
    <property type="hits" value="10 hits in 10 CRISPR screens"/>
</dbReference>
<dbReference type="PRO" id="PR:P36517"/>
<dbReference type="Proteomes" id="UP000002311">
    <property type="component" value="Chromosome XII"/>
</dbReference>
<dbReference type="RNAct" id="P36517">
    <property type="molecule type" value="protein"/>
</dbReference>
<dbReference type="GO" id="GO:0005743">
    <property type="term" value="C:mitochondrial inner membrane"/>
    <property type="evidence" value="ECO:0000303"/>
    <property type="project" value="ComplexPortal"/>
</dbReference>
<dbReference type="GO" id="GO:0005762">
    <property type="term" value="C:mitochondrial large ribosomal subunit"/>
    <property type="evidence" value="ECO:0000314"/>
    <property type="project" value="SGD"/>
</dbReference>
<dbReference type="GO" id="GO:0005739">
    <property type="term" value="C:mitochondrion"/>
    <property type="evidence" value="ECO:0007005"/>
    <property type="project" value="SGD"/>
</dbReference>
<dbReference type="GO" id="GO:0003735">
    <property type="term" value="F:structural constituent of ribosome"/>
    <property type="evidence" value="ECO:0000314"/>
    <property type="project" value="SGD"/>
</dbReference>
<dbReference type="GO" id="GO:0032543">
    <property type="term" value="P:mitochondrial translation"/>
    <property type="evidence" value="ECO:0000315"/>
    <property type="project" value="SGD"/>
</dbReference>
<dbReference type="Gene3D" id="6.10.140.1190">
    <property type="match status" value="1"/>
</dbReference>
<dbReference type="Gene3D" id="6.10.330.20">
    <property type="match status" value="1"/>
</dbReference>
<dbReference type="InterPro" id="IPR038340">
    <property type="entry name" value="MRP-L47_sf"/>
</dbReference>
<dbReference type="InterPro" id="IPR010729">
    <property type="entry name" value="Ribosomal_uL29_mit"/>
</dbReference>
<dbReference type="PANTHER" id="PTHR21183:SF18">
    <property type="entry name" value="LARGE RIBOSOMAL SUBUNIT PROTEIN UL29M"/>
    <property type="match status" value="1"/>
</dbReference>
<dbReference type="PANTHER" id="PTHR21183">
    <property type="entry name" value="RIBOSOMAL PROTEIN L47, MITOCHONDRIAL-RELATED"/>
    <property type="match status" value="1"/>
</dbReference>
<dbReference type="Pfam" id="PF06984">
    <property type="entry name" value="MRP-L47"/>
    <property type="match status" value="1"/>
</dbReference>
<evidence type="ECO:0000256" key="1">
    <source>
        <dbReference type="SAM" id="MobiDB-lite"/>
    </source>
</evidence>
<evidence type="ECO:0000269" key="2">
    <source>
    </source>
</evidence>
<evidence type="ECO:0000269" key="3">
    <source>
    </source>
</evidence>
<evidence type="ECO:0000269" key="4">
    <source>
    </source>
</evidence>
<evidence type="ECO:0000269" key="5">
    <source>
    </source>
</evidence>
<evidence type="ECO:0000269" key="6">
    <source>
    </source>
</evidence>
<evidence type="ECO:0000269" key="7">
    <source>
    </source>
</evidence>
<evidence type="ECO:0000303" key="8">
    <source>
    </source>
</evidence>
<evidence type="ECO:0000305" key="9"/>
<evidence type="ECO:0000305" key="10">
    <source>
    </source>
</evidence>
<evidence type="ECO:0000305" key="11">
    <source>
    </source>
</evidence>
<protein>
    <recommendedName>
        <fullName evidence="8">Large ribosomal subunit protein uL29m</fullName>
    </recommendedName>
    <alternativeName>
        <fullName>54S ribosomal protein L4, mitochondrial</fullName>
    </alternativeName>
    <alternativeName>
        <fullName>YmL4</fullName>
    </alternativeName>
</protein>
<feature type="transit peptide" description="Mitochondrion" evidence="7">
    <location>
        <begin position="1"/>
        <end position="14"/>
    </location>
</feature>
<feature type="chain" id="PRO_0000030570" description="Large ribosomal subunit protein uL29m">
    <location>
        <begin position="15"/>
        <end position="319"/>
    </location>
</feature>
<feature type="region of interest" description="Disordered" evidence="1">
    <location>
        <begin position="1"/>
        <end position="55"/>
    </location>
</feature>
<feature type="compositionally biased region" description="Basic residues" evidence="1">
    <location>
        <begin position="15"/>
        <end position="24"/>
    </location>
</feature>
<feature type="compositionally biased region" description="Polar residues" evidence="1">
    <location>
        <begin position="38"/>
        <end position="48"/>
    </location>
</feature>
<feature type="sequence conflict" description="In Ref. 1; CAA83057." evidence="9" ref="1">
    <original>E</original>
    <variation>K</variation>
    <location>
        <position position="168"/>
    </location>
</feature>